<name>IF2_HELPY</name>
<gene>
    <name type="primary">infB</name>
    <name type="ordered locus">HP_1048</name>
</gene>
<reference key="1">
    <citation type="journal article" date="1997" name="Nature">
        <title>The complete genome sequence of the gastric pathogen Helicobacter pylori.</title>
        <authorList>
            <person name="Tomb J.-F."/>
            <person name="White O."/>
            <person name="Kerlavage A.R."/>
            <person name="Clayton R.A."/>
            <person name="Sutton G.G."/>
            <person name="Fleischmann R.D."/>
            <person name="Ketchum K.A."/>
            <person name="Klenk H.-P."/>
            <person name="Gill S.R."/>
            <person name="Dougherty B.A."/>
            <person name="Nelson K.E."/>
            <person name="Quackenbush J."/>
            <person name="Zhou L."/>
            <person name="Kirkness E.F."/>
            <person name="Peterson S.N."/>
            <person name="Loftus B.J."/>
            <person name="Richardson D.L."/>
            <person name="Dodson R.J."/>
            <person name="Khalak H.G."/>
            <person name="Glodek A."/>
            <person name="McKenney K."/>
            <person name="FitzGerald L.M."/>
            <person name="Lee N."/>
            <person name="Adams M.D."/>
            <person name="Hickey E.K."/>
            <person name="Berg D.E."/>
            <person name="Gocayne J.D."/>
            <person name="Utterback T.R."/>
            <person name="Peterson J.D."/>
            <person name="Kelley J.M."/>
            <person name="Cotton M.D."/>
            <person name="Weidman J.F."/>
            <person name="Fujii C."/>
            <person name="Bowman C."/>
            <person name="Watthey L."/>
            <person name="Wallin E."/>
            <person name="Hayes W.S."/>
            <person name="Borodovsky M."/>
            <person name="Karp P.D."/>
            <person name="Smith H.O."/>
            <person name="Fraser C.M."/>
            <person name="Venter J.C."/>
        </authorList>
    </citation>
    <scope>NUCLEOTIDE SEQUENCE [LARGE SCALE GENOMIC DNA]</scope>
    <source>
        <strain>ATCC 700392 / 26695</strain>
    </source>
</reference>
<organism>
    <name type="scientific">Helicobacter pylori (strain ATCC 700392 / 26695)</name>
    <name type="common">Campylobacter pylori</name>
    <dbReference type="NCBI Taxonomy" id="85962"/>
    <lineage>
        <taxon>Bacteria</taxon>
        <taxon>Pseudomonadati</taxon>
        <taxon>Campylobacterota</taxon>
        <taxon>Epsilonproteobacteria</taxon>
        <taxon>Campylobacterales</taxon>
        <taxon>Helicobacteraceae</taxon>
        <taxon>Helicobacter</taxon>
    </lineage>
</organism>
<sequence>MSGMVDLKEFLAELGKTQKELKNVIEQAKDIGLELKTNSKMTPEQAGKLYKYIVDGIKEQIQANQPAKNPEQDNKDDLNTAVASKSLNKKVSKTPKKEETKSQPKPKKTKEKKKEAPTPIAKKKGGIEIVNTFENQTPPTENTPKVVSHSQIEKAKQKLQEIQKSREALNKLTQSNANNASNANNAKKEISEVKKQEQEIKRHENIKRRTGFRVIKRNDEVENESENSVTESKKPTQSAAAIFEDIKKEWQEKDKQEAKKAKKPSKPKATPTAKNNKSHKIDFSDARDFKGNDIYDDETDEILLFDLHEQDNFNKEEEEKEIRQNINDRVRVQRKNPWMNESGIKRQSKKKRAFRNDNSQKVIQSTTAIPEEVRVYEFAQKANLNLADVIKTLFNLGLMVTKNDFLDKDSIEILAEEFHLEISVQNTLEEFEVEEVLEGVKKERPPVVTIMGHVDHGKTSLLDKIRDKRVAHTEAGGITQHIGAYMVEKNDKWVSFIDTPGHEAFSQMRNRGAQVTDIAVIVIAADDGVKQQTIEALEHAKAANVPVIFAMNKMDKPNVNPDKLKAECAELGYNPVDWGGEHEFIPVSAKTGDGIDNLLETILIQAGIMELKAIEEGSARAVVLEGSVEKGRGAVATVIVQSGTLSVGDSFFAETAFGKVRTMTDDQGKSIQNLKPSMVALITGLSEVPPAGSVLIGVENDSIARLQAQKRATYLRQKALSKSTKVSFDELSEMVANKELKNIPVVIKADTQGSLEAIKNSLLELNNEEVAIQVIHSGVGGITENDLSLVSSSEHAVILGFNIRPTGNVKNKAKEYNVSIKTYTVIYALIEEMRSLLLGLMSPIIEEEHTGQAEVRETFNIPKVGTIAGCVVSDGVIARGIKARLIRDGVVIHTGEILSLKRFKDDVKEVSKGYECGIMLDNYNEIKVGDVFETYKEIHKKRTL</sequence>
<dbReference type="EMBL" id="AE000511">
    <property type="protein sequence ID" value="AAD08093.1"/>
    <property type="molecule type" value="Genomic_DNA"/>
</dbReference>
<dbReference type="PIR" id="H64650">
    <property type="entry name" value="H64650"/>
</dbReference>
<dbReference type="RefSeq" id="NP_207839.1">
    <property type="nucleotide sequence ID" value="NC_000915.1"/>
</dbReference>
<dbReference type="RefSeq" id="WP_000016275.1">
    <property type="nucleotide sequence ID" value="NC_018939.1"/>
</dbReference>
<dbReference type="SMR" id="P55972"/>
<dbReference type="DIP" id="DIP-3291N"/>
<dbReference type="FunCoup" id="P55972">
    <property type="interactions" value="395"/>
</dbReference>
<dbReference type="IntAct" id="P55972">
    <property type="interactions" value="6"/>
</dbReference>
<dbReference type="MINT" id="P55972"/>
<dbReference type="STRING" id="85962.HP_1048"/>
<dbReference type="PaxDb" id="85962-C694_05420"/>
<dbReference type="EnsemblBacteria" id="AAD08093">
    <property type="protein sequence ID" value="AAD08093"/>
    <property type="gene ID" value="HP_1048"/>
</dbReference>
<dbReference type="KEGG" id="heo:C694_05420"/>
<dbReference type="KEGG" id="hpy:HP_1048"/>
<dbReference type="PATRIC" id="fig|85962.47.peg.1127"/>
<dbReference type="eggNOG" id="COG0532">
    <property type="taxonomic scope" value="Bacteria"/>
</dbReference>
<dbReference type="InParanoid" id="P55972"/>
<dbReference type="OrthoDB" id="9811804at2"/>
<dbReference type="PhylomeDB" id="P55972"/>
<dbReference type="Proteomes" id="UP000000429">
    <property type="component" value="Chromosome"/>
</dbReference>
<dbReference type="GO" id="GO:0005737">
    <property type="term" value="C:cytoplasm"/>
    <property type="evidence" value="ECO:0000318"/>
    <property type="project" value="GO_Central"/>
</dbReference>
<dbReference type="GO" id="GO:0005829">
    <property type="term" value="C:cytosol"/>
    <property type="evidence" value="ECO:0000318"/>
    <property type="project" value="GO_Central"/>
</dbReference>
<dbReference type="GO" id="GO:0005525">
    <property type="term" value="F:GTP binding"/>
    <property type="evidence" value="ECO:0007669"/>
    <property type="project" value="UniProtKB-KW"/>
</dbReference>
<dbReference type="GO" id="GO:0003924">
    <property type="term" value="F:GTPase activity"/>
    <property type="evidence" value="ECO:0007669"/>
    <property type="project" value="UniProtKB-UniRule"/>
</dbReference>
<dbReference type="GO" id="GO:0003743">
    <property type="term" value="F:translation initiation factor activity"/>
    <property type="evidence" value="ECO:0000318"/>
    <property type="project" value="GO_Central"/>
</dbReference>
<dbReference type="GO" id="GO:0006413">
    <property type="term" value="P:translational initiation"/>
    <property type="evidence" value="ECO:0000318"/>
    <property type="project" value="GO_Central"/>
</dbReference>
<dbReference type="CDD" id="cd01887">
    <property type="entry name" value="IF2_eIF5B"/>
    <property type="match status" value="1"/>
</dbReference>
<dbReference type="CDD" id="cd03702">
    <property type="entry name" value="IF2_mtIF2_II"/>
    <property type="match status" value="1"/>
</dbReference>
<dbReference type="CDD" id="cd03692">
    <property type="entry name" value="mtIF2_IVc"/>
    <property type="match status" value="1"/>
</dbReference>
<dbReference type="FunFam" id="2.40.30.10:FF:000008">
    <property type="entry name" value="Translation initiation factor IF-2"/>
    <property type="match status" value="1"/>
</dbReference>
<dbReference type="FunFam" id="2.40.30.10:FF:000054">
    <property type="entry name" value="Translation initiation factor IF-2"/>
    <property type="match status" value="1"/>
</dbReference>
<dbReference type="FunFam" id="3.40.50.10050:FF:000001">
    <property type="entry name" value="Translation initiation factor IF-2"/>
    <property type="match status" value="1"/>
</dbReference>
<dbReference type="FunFam" id="3.40.50.300:FF:000019">
    <property type="entry name" value="Translation initiation factor IF-2"/>
    <property type="match status" value="1"/>
</dbReference>
<dbReference type="Gene3D" id="3.40.50.300">
    <property type="entry name" value="P-loop containing nucleotide triphosphate hydrolases"/>
    <property type="match status" value="1"/>
</dbReference>
<dbReference type="Gene3D" id="2.40.30.10">
    <property type="entry name" value="Translation factors"/>
    <property type="match status" value="2"/>
</dbReference>
<dbReference type="Gene3D" id="3.40.50.10050">
    <property type="entry name" value="Translation initiation factor IF- 2, domain 3"/>
    <property type="match status" value="1"/>
</dbReference>
<dbReference type="HAMAP" id="MF_00100_B">
    <property type="entry name" value="IF_2_B"/>
    <property type="match status" value="1"/>
</dbReference>
<dbReference type="InterPro" id="IPR053905">
    <property type="entry name" value="EF-G-like_DII"/>
</dbReference>
<dbReference type="InterPro" id="IPR044145">
    <property type="entry name" value="IF2_II"/>
</dbReference>
<dbReference type="InterPro" id="IPR006847">
    <property type="entry name" value="IF2_N"/>
</dbReference>
<dbReference type="InterPro" id="IPR027417">
    <property type="entry name" value="P-loop_NTPase"/>
</dbReference>
<dbReference type="InterPro" id="IPR005225">
    <property type="entry name" value="Small_GTP-bd"/>
</dbReference>
<dbReference type="InterPro" id="IPR000795">
    <property type="entry name" value="T_Tr_GTP-bd_dom"/>
</dbReference>
<dbReference type="InterPro" id="IPR000178">
    <property type="entry name" value="TF_IF2_bacterial-like"/>
</dbReference>
<dbReference type="InterPro" id="IPR015760">
    <property type="entry name" value="TIF_IF2"/>
</dbReference>
<dbReference type="InterPro" id="IPR023115">
    <property type="entry name" value="TIF_IF2_dom3"/>
</dbReference>
<dbReference type="InterPro" id="IPR036925">
    <property type="entry name" value="TIF_IF2_dom3_sf"/>
</dbReference>
<dbReference type="InterPro" id="IPR009000">
    <property type="entry name" value="Transl_B-barrel_sf"/>
</dbReference>
<dbReference type="NCBIfam" id="TIGR00487">
    <property type="entry name" value="IF-2"/>
    <property type="match status" value="1"/>
</dbReference>
<dbReference type="NCBIfam" id="TIGR00231">
    <property type="entry name" value="small_GTP"/>
    <property type="match status" value="1"/>
</dbReference>
<dbReference type="PANTHER" id="PTHR43381:SF5">
    <property type="entry name" value="TR-TYPE G DOMAIN-CONTAINING PROTEIN"/>
    <property type="match status" value="1"/>
</dbReference>
<dbReference type="PANTHER" id="PTHR43381">
    <property type="entry name" value="TRANSLATION INITIATION FACTOR IF-2-RELATED"/>
    <property type="match status" value="1"/>
</dbReference>
<dbReference type="Pfam" id="PF22042">
    <property type="entry name" value="EF-G_D2"/>
    <property type="match status" value="1"/>
</dbReference>
<dbReference type="Pfam" id="PF00009">
    <property type="entry name" value="GTP_EFTU"/>
    <property type="match status" value="1"/>
</dbReference>
<dbReference type="Pfam" id="PF11987">
    <property type="entry name" value="IF-2"/>
    <property type="match status" value="1"/>
</dbReference>
<dbReference type="Pfam" id="PF04760">
    <property type="entry name" value="IF2_N"/>
    <property type="match status" value="1"/>
</dbReference>
<dbReference type="SUPFAM" id="SSF52156">
    <property type="entry name" value="Initiation factor IF2/eIF5b, domain 3"/>
    <property type="match status" value="1"/>
</dbReference>
<dbReference type="SUPFAM" id="SSF52540">
    <property type="entry name" value="P-loop containing nucleoside triphosphate hydrolases"/>
    <property type="match status" value="1"/>
</dbReference>
<dbReference type="SUPFAM" id="SSF50447">
    <property type="entry name" value="Translation proteins"/>
    <property type="match status" value="2"/>
</dbReference>
<dbReference type="PROSITE" id="PS51722">
    <property type="entry name" value="G_TR_2"/>
    <property type="match status" value="1"/>
</dbReference>
<dbReference type="PROSITE" id="PS01176">
    <property type="entry name" value="IF2"/>
    <property type="match status" value="1"/>
</dbReference>
<accession>P55972</accession>
<feature type="chain" id="PRO_0000137209" description="Translation initiation factor IF-2">
    <location>
        <begin position="1"/>
        <end position="944"/>
    </location>
</feature>
<feature type="domain" description="tr-type G">
    <location>
        <begin position="443"/>
        <end position="612"/>
    </location>
</feature>
<feature type="region of interest" description="Disordered" evidence="2">
    <location>
        <begin position="61"/>
        <end position="157"/>
    </location>
</feature>
<feature type="region of interest" description="Disordered" evidence="2">
    <location>
        <begin position="173"/>
        <end position="281"/>
    </location>
</feature>
<feature type="region of interest" description="G1" evidence="1">
    <location>
        <begin position="452"/>
        <end position="459"/>
    </location>
</feature>
<feature type="region of interest" description="G2" evidence="1">
    <location>
        <begin position="477"/>
        <end position="481"/>
    </location>
</feature>
<feature type="region of interest" description="G3" evidence="1">
    <location>
        <begin position="498"/>
        <end position="501"/>
    </location>
</feature>
<feature type="region of interest" description="G4" evidence="1">
    <location>
        <begin position="552"/>
        <end position="555"/>
    </location>
</feature>
<feature type="region of interest" description="G5" evidence="1">
    <location>
        <begin position="588"/>
        <end position="590"/>
    </location>
</feature>
<feature type="compositionally biased region" description="Polar residues" evidence="2">
    <location>
        <begin position="132"/>
        <end position="150"/>
    </location>
</feature>
<feature type="compositionally biased region" description="Low complexity" evidence="2">
    <location>
        <begin position="175"/>
        <end position="185"/>
    </location>
</feature>
<feature type="compositionally biased region" description="Basic and acidic residues" evidence="2">
    <location>
        <begin position="186"/>
        <end position="203"/>
    </location>
</feature>
<feature type="compositionally biased region" description="Basic residues" evidence="2">
    <location>
        <begin position="204"/>
        <end position="215"/>
    </location>
</feature>
<feature type="compositionally biased region" description="Basic and acidic residues" evidence="2">
    <location>
        <begin position="244"/>
        <end position="259"/>
    </location>
</feature>
<feature type="binding site" evidence="1">
    <location>
        <begin position="452"/>
        <end position="459"/>
    </location>
    <ligand>
        <name>GTP</name>
        <dbReference type="ChEBI" id="CHEBI:37565"/>
    </ligand>
</feature>
<feature type="binding site" evidence="1">
    <location>
        <begin position="498"/>
        <end position="502"/>
    </location>
    <ligand>
        <name>GTP</name>
        <dbReference type="ChEBI" id="CHEBI:37565"/>
    </ligand>
</feature>
<feature type="binding site" evidence="1">
    <location>
        <begin position="552"/>
        <end position="555"/>
    </location>
    <ligand>
        <name>GTP</name>
        <dbReference type="ChEBI" id="CHEBI:37565"/>
    </ligand>
</feature>
<evidence type="ECO:0000250" key="1"/>
<evidence type="ECO:0000256" key="2">
    <source>
        <dbReference type="SAM" id="MobiDB-lite"/>
    </source>
</evidence>
<evidence type="ECO:0000305" key="3"/>
<comment type="function">
    <text evidence="1">One of the essential components for the initiation of protein synthesis. Protects formylmethionyl-tRNA from spontaneous hydrolysis and promotes its binding to the 30S ribosomal subunits. Also involved in the hydrolysis of GTP during the formation of the 70S ribosomal complex (By similarity).</text>
</comment>
<comment type="subcellular location">
    <subcellularLocation>
        <location evidence="1">Cytoplasm</location>
    </subcellularLocation>
</comment>
<comment type="similarity">
    <text evidence="3">Belongs to the TRAFAC class translation factor GTPase superfamily. Classic translation factor GTPase family. IF-2 subfamily.</text>
</comment>
<keyword id="KW-0963">Cytoplasm</keyword>
<keyword id="KW-0342">GTP-binding</keyword>
<keyword id="KW-0396">Initiation factor</keyword>
<keyword id="KW-0547">Nucleotide-binding</keyword>
<keyword id="KW-0648">Protein biosynthesis</keyword>
<keyword id="KW-1185">Reference proteome</keyword>
<protein>
    <recommendedName>
        <fullName>Translation initiation factor IF-2</fullName>
    </recommendedName>
</protein>
<proteinExistence type="inferred from homology"/>